<protein>
    <recommendedName>
        <fullName>Sulredoxin</fullName>
    </recommendedName>
    <alternativeName>
        <fullName>Pink FeS protein</fullName>
    </alternativeName>
</protein>
<evidence type="ECO:0000255" key="1">
    <source>
        <dbReference type="PROSITE-ProRule" id="PRU00628"/>
    </source>
</evidence>
<evidence type="ECO:0000269" key="2">
    <source>
    </source>
</evidence>
<evidence type="ECO:0000305" key="3"/>
<reference key="1">
    <citation type="submission" date="1999-02" db="EMBL/GenBank/DDBJ databases">
        <title>Sulredoxin from the thermoacidophilic archaeon Sulfolobus sp. strain 7 is a novel water-soluble Rieske (2Fe-2S) protein: primary structure and one- and two-dimensional electron spin-echo envelope modulation spectroscopic studies.</title>
        <authorList>
            <person name="Iwasaki T."/>
            <person name="Iwasaki H."/>
            <person name="Hayashi-Iwasaki Y."/>
            <person name="Oshima T."/>
            <person name="Dikanov S.A."/>
        </authorList>
    </citation>
    <scope>NUCLEOTIDE SEQUENCE [GENOMIC DNA]</scope>
    <source>
        <strain>DSM 16993 / JCM 10545 / NBRC 100140 / 7</strain>
    </source>
</reference>
<reference key="2">
    <citation type="journal article" date="2001" name="DNA Res.">
        <title>Complete genome sequence of an aerobic thermoacidophilic Crenarchaeon, Sulfolobus tokodaii strain7.</title>
        <authorList>
            <person name="Kawarabayasi Y."/>
            <person name="Hino Y."/>
            <person name="Horikawa H."/>
            <person name="Jin-no K."/>
            <person name="Takahashi M."/>
            <person name="Sekine M."/>
            <person name="Baba S."/>
            <person name="Ankai A."/>
            <person name="Kosugi H."/>
            <person name="Hosoyama A."/>
            <person name="Fukui S."/>
            <person name="Nagai Y."/>
            <person name="Nishijima K."/>
            <person name="Otsuka R."/>
            <person name="Nakazawa H."/>
            <person name="Takamiya M."/>
            <person name="Kato Y."/>
            <person name="Yoshizawa T."/>
            <person name="Tanaka T."/>
            <person name="Kudoh Y."/>
            <person name="Yamazaki J."/>
            <person name="Kushida N."/>
            <person name="Oguchi A."/>
            <person name="Aoki K."/>
            <person name="Masuda S."/>
            <person name="Yanagii M."/>
            <person name="Nishimura M."/>
            <person name="Yamagishi A."/>
            <person name="Oshima T."/>
            <person name="Kikuchi H."/>
        </authorList>
    </citation>
    <scope>NUCLEOTIDE SEQUENCE [LARGE SCALE GENOMIC DNA]</scope>
    <source>
        <strain>DSM 16993 / JCM 10545 / NBRC 100140 / 7</strain>
    </source>
</reference>
<reference key="3">
    <citation type="journal article" date="1995" name="J. Bacteriol.">
        <title>Sulredoxin: a novel iron-sulfur protein of the thermoacidophilic archaeon Sulfolobus sp. strain 7 with a Rieske-type [2Fe-2S] center.</title>
        <authorList>
            <person name="Iwasaki T."/>
            <person name="Isogai Y."/>
            <person name="Iizuka T."/>
            <person name="Oshima T."/>
        </authorList>
    </citation>
    <scope>PROTEIN SEQUENCE OF 2-22</scope>
    <scope>CHARACTERIZATION</scope>
    <scope>MASS SPECTROMETRY</scope>
    <source>
        <strain>DSM 16993 / JCM 10545 / NBRC 100140 / 7</strain>
    </source>
</reference>
<reference key="4">
    <citation type="journal article" date="1996" name="J. Biol. Chem.">
        <title>Redox-linked ionization of sulredoxin, an archaeal Rieske-type (2Fe-2S) protein from Sulfolobus sp. strain 7.</title>
        <authorList>
            <person name="Iwasaki T."/>
            <person name="Imai T."/>
            <person name="Urushiyama A."/>
            <person name="Oshima T."/>
        </authorList>
    </citation>
    <scope>CHARACTERIZATION</scope>
    <source>
        <strain>DSM 16993 / JCM 10545 / NBRC 100140 / 7</strain>
    </source>
</reference>
<proteinExistence type="evidence at protein level"/>
<dbReference type="EMBL" id="AB023295">
    <property type="protein sequence ID" value="BAB18678.1"/>
    <property type="status" value="ALT_INIT"/>
    <property type="molecule type" value="Genomic_DNA"/>
</dbReference>
<dbReference type="EMBL" id="BA000023">
    <property type="protein sequence ID" value="BAK54368.1"/>
    <property type="molecule type" value="Genomic_DNA"/>
</dbReference>
<dbReference type="RefSeq" id="WP_052846395.1">
    <property type="nucleotide sequence ID" value="NC_003106.2"/>
</dbReference>
<dbReference type="SMR" id="Q9HH83"/>
<dbReference type="STRING" id="273063.STK_07180"/>
<dbReference type="GeneID" id="95643141"/>
<dbReference type="KEGG" id="sto:STK_07180"/>
<dbReference type="PATRIC" id="fig|273063.9.peg.810"/>
<dbReference type="eggNOG" id="arCOG02854">
    <property type="taxonomic scope" value="Archaea"/>
</dbReference>
<dbReference type="OrthoDB" id="6837at2157"/>
<dbReference type="Proteomes" id="UP000001015">
    <property type="component" value="Chromosome"/>
</dbReference>
<dbReference type="GO" id="GO:0005737">
    <property type="term" value="C:cytoplasm"/>
    <property type="evidence" value="ECO:0007669"/>
    <property type="project" value="UniProtKB-SubCell"/>
</dbReference>
<dbReference type="GO" id="GO:0051537">
    <property type="term" value="F:2 iron, 2 sulfur cluster binding"/>
    <property type="evidence" value="ECO:0007669"/>
    <property type="project" value="UniProtKB-KW"/>
</dbReference>
<dbReference type="GO" id="GO:0046872">
    <property type="term" value="F:metal ion binding"/>
    <property type="evidence" value="ECO:0007669"/>
    <property type="project" value="UniProtKB-KW"/>
</dbReference>
<dbReference type="GO" id="GO:0016491">
    <property type="term" value="F:oxidoreductase activity"/>
    <property type="evidence" value="ECO:0007669"/>
    <property type="project" value="UniProtKB-KW"/>
</dbReference>
<dbReference type="FunFam" id="2.102.10.10:FF:000038">
    <property type="entry name" value="Rieske (2Fe-2S) protein"/>
    <property type="match status" value="1"/>
</dbReference>
<dbReference type="Gene3D" id="2.102.10.10">
    <property type="entry name" value="Rieske [2Fe-2S] iron-sulphur domain"/>
    <property type="match status" value="1"/>
</dbReference>
<dbReference type="InterPro" id="IPR017941">
    <property type="entry name" value="Rieske_2Fe-2S"/>
</dbReference>
<dbReference type="InterPro" id="IPR036922">
    <property type="entry name" value="Rieske_2Fe-2S_sf"/>
</dbReference>
<dbReference type="InterPro" id="IPR053457">
    <property type="entry name" value="SDX-like"/>
</dbReference>
<dbReference type="NCBIfam" id="NF041174">
    <property type="entry name" value="SDX_Thmprot"/>
    <property type="match status" value="1"/>
</dbReference>
<dbReference type="PANTHER" id="PTHR21496">
    <property type="entry name" value="FERREDOXIN-RELATED"/>
    <property type="match status" value="1"/>
</dbReference>
<dbReference type="PANTHER" id="PTHR21496:SF24">
    <property type="entry name" value="SULREDOXIN-RELATED"/>
    <property type="match status" value="1"/>
</dbReference>
<dbReference type="Pfam" id="PF00355">
    <property type="entry name" value="Rieske"/>
    <property type="match status" value="1"/>
</dbReference>
<dbReference type="SUPFAM" id="SSF50022">
    <property type="entry name" value="ISP domain"/>
    <property type="match status" value="1"/>
</dbReference>
<dbReference type="PROSITE" id="PS51296">
    <property type="entry name" value="RIESKE"/>
    <property type="match status" value="1"/>
</dbReference>
<sequence>MVWKRTISAKALEKAKSAAVKVDDKVIFIANVNGNLYAMDAVCSHARCILGKLDEEKLTVRCYCHLALFDLRTGQMLEPPYVAPDAPKEKLGLKTYQIRDNNGWIEVDV</sequence>
<feature type="initiator methionine" description="Removed" evidence="2">
    <location>
        <position position="1"/>
    </location>
</feature>
<feature type="chain" id="PRO_0000127796" description="Sulredoxin">
    <location>
        <begin position="2"/>
        <end position="109"/>
    </location>
</feature>
<feature type="domain" description="Rieske" evidence="1">
    <location>
        <begin position="3"/>
        <end position="107"/>
    </location>
</feature>
<feature type="binding site" evidence="1">
    <location>
        <position position="43"/>
    </location>
    <ligand>
        <name>[2Fe-2S] cluster</name>
        <dbReference type="ChEBI" id="CHEBI:190135"/>
    </ligand>
</feature>
<feature type="binding site" evidence="1">
    <location>
        <position position="45"/>
    </location>
    <ligand>
        <name>[2Fe-2S] cluster</name>
        <dbReference type="ChEBI" id="CHEBI:190135"/>
    </ligand>
</feature>
<feature type="binding site" evidence="1">
    <location>
        <position position="62"/>
    </location>
    <ligand>
        <name>[2Fe-2S] cluster</name>
        <dbReference type="ChEBI" id="CHEBI:190135"/>
    </ligand>
</feature>
<feature type="binding site" evidence="1">
    <location>
        <position position="65"/>
    </location>
    <ligand>
        <name>[2Fe-2S] cluster</name>
        <dbReference type="ChEBI" id="CHEBI:190135"/>
    </ligand>
</feature>
<feature type="sequence conflict" description="In Ref. 3; AA sequence." evidence="3" ref="3">
    <original>K</original>
    <variation>R</variation>
    <location>
        <position position="14"/>
    </location>
</feature>
<keyword id="KW-0001">2Fe-2S</keyword>
<keyword id="KW-0963">Cytoplasm</keyword>
<keyword id="KW-0903">Direct protein sequencing</keyword>
<keyword id="KW-0249">Electron transport</keyword>
<keyword id="KW-0408">Iron</keyword>
<keyword id="KW-0411">Iron-sulfur</keyword>
<keyword id="KW-0479">Metal-binding</keyword>
<keyword id="KW-0560">Oxidoreductase</keyword>
<keyword id="KW-1185">Reference proteome</keyword>
<keyword id="KW-0813">Transport</keyword>
<name>SDX_SULTO</name>
<organism>
    <name type="scientific">Sulfurisphaera tokodaii (strain DSM 16993 / JCM 10545 / NBRC 100140 / 7)</name>
    <name type="common">Sulfolobus tokodaii</name>
    <dbReference type="NCBI Taxonomy" id="273063"/>
    <lineage>
        <taxon>Archaea</taxon>
        <taxon>Thermoproteota</taxon>
        <taxon>Thermoprotei</taxon>
        <taxon>Sulfolobales</taxon>
        <taxon>Sulfolobaceae</taxon>
        <taxon>Sulfurisphaera</taxon>
    </lineage>
</organism>
<gene>
    <name type="primary">sdx</name>
    <name type="ordered locus">STK_07180</name>
</gene>
<accession>Q9HH83</accession>
<accession>F9VN71</accession>
<accession>Q9UWI3</accession>
<comment type="function">
    <text>Not yet known.</text>
</comment>
<comment type="cofactor">
    <cofactor>
        <name>[2Fe-2S] cluster</name>
        <dbReference type="ChEBI" id="CHEBI:190135"/>
    </cofactor>
    <text>Binds 1 [2Fe-2S] cluster per subunit.</text>
</comment>
<comment type="biophysicochemical properties">
    <redoxPotential>
        <text>E(0) is +188 +/- 9 mV.</text>
    </redoxPotential>
</comment>
<comment type="subunit">
    <text>Homooligomeric.</text>
</comment>
<comment type="subcellular location">
    <subcellularLocation>
        <location>Cytoplasm</location>
    </subcellularLocation>
</comment>
<comment type="mass spectrometry"/>
<comment type="similarity">
    <text evidence="3">Belongs to the SDX family.</text>
</comment>
<comment type="sequence caution" evidence="3">
    <conflict type="erroneous initiation">
        <sequence resource="EMBL-CDS" id="BAB18678"/>
    </conflict>
</comment>